<gene>
    <name type="primary">hba1</name>
</gene>
<accession>P45718</accession>
<reference key="1">
    <citation type="journal article" date="1994" name="J. Biol. Chem.">
        <title>Molecular characterization of the functionally distinct hemoglobins of the Antarctic fish Trematomus newnesi.</title>
        <authorList>
            <person name="D'Avino R."/>
            <person name="Caruso C."/>
            <person name="Tamburrini M."/>
            <person name="Romano M."/>
            <person name="Rutigliano B."/>
            <person name="Polverino de Laureto P."/>
            <person name="Camardella L."/>
            <person name="Carratore V."/>
            <person name="di Prisco G."/>
        </authorList>
    </citation>
    <scope>PROTEIN SEQUENCE</scope>
    <scope>ACETYLATION AT SER-1</scope>
    <scope>FUNCTION</scope>
    <scope>SUBUNIT</scope>
</reference>
<feature type="chain" id="PRO_0000052787" description="Hemoglobin subunit alpha-1">
    <location>
        <begin position="1"/>
        <end position="142"/>
    </location>
</feature>
<feature type="domain" description="Globin" evidence="1">
    <location>
        <begin position="1"/>
        <end position="142"/>
    </location>
</feature>
<feature type="binding site" evidence="1">
    <location>
        <position position="59"/>
    </location>
    <ligand>
        <name>O2</name>
        <dbReference type="ChEBI" id="CHEBI:15379"/>
    </ligand>
</feature>
<feature type="binding site" description="proximal binding residue" evidence="1">
    <location>
        <position position="88"/>
    </location>
    <ligand>
        <name>heme b</name>
        <dbReference type="ChEBI" id="CHEBI:60344"/>
    </ligand>
    <ligandPart>
        <name>Fe</name>
        <dbReference type="ChEBI" id="CHEBI:18248"/>
    </ligandPart>
</feature>
<feature type="modified residue" description="N-acetylserine" evidence="2">
    <location>
        <position position="1"/>
    </location>
</feature>
<feature type="helix" evidence="3">
    <location>
        <begin position="4"/>
        <end position="17"/>
    </location>
</feature>
<feature type="helix" evidence="3">
    <location>
        <begin position="18"/>
        <end position="20"/>
    </location>
</feature>
<feature type="helix" evidence="3">
    <location>
        <begin position="21"/>
        <end position="35"/>
    </location>
</feature>
<feature type="helix" evidence="3">
    <location>
        <begin position="37"/>
        <end position="43"/>
    </location>
</feature>
<feature type="helix" evidence="3">
    <location>
        <begin position="54"/>
        <end position="72"/>
    </location>
</feature>
<feature type="turn" evidence="3">
    <location>
        <begin position="73"/>
        <end position="75"/>
    </location>
</feature>
<feature type="helix" evidence="3">
    <location>
        <begin position="77"/>
        <end position="90"/>
    </location>
</feature>
<feature type="helix" evidence="3">
    <location>
        <begin position="96"/>
        <end position="98"/>
    </location>
</feature>
<feature type="helix" evidence="3">
    <location>
        <begin position="99"/>
        <end position="113"/>
    </location>
</feature>
<feature type="turn" evidence="3">
    <location>
        <begin position="115"/>
        <end position="117"/>
    </location>
</feature>
<feature type="helix" evidence="3">
    <location>
        <begin position="120"/>
        <end position="137"/>
    </location>
</feature>
<feature type="helix" evidence="3">
    <location>
        <begin position="138"/>
        <end position="140"/>
    </location>
</feature>
<evidence type="ECO:0000255" key="1">
    <source>
        <dbReference type="PROSITE-ProRule" id="PRU00238"/>
    </source>
</evidence>
<evidence type="ECO:0000269" key="2">
    <source>
    </source>
</evidence>
<evidence type="ECO:0007829" key="3">
    <source>
        <dbReference type="PDB" id="3D1K"/>
    </source>
</evidence>
<keyword id="KW-0002">3D-structure</keyword>
<keyword id="KW-0007">Acetylation</keyword>
<keyword id="KW-0903">Direct protein sequencing</keyword>
<keyword id="KW-0349">Heme</keyword>
<keyword id="KW-0408">Iron</keyword>
<keyword id="KW-0479">Metal-binding</keyword>
<keyword id="KW-0561">Oxygen transport</keyword>
<keyword id="KW-0813">Transport</keyword>
<name>HBA1_TRENE</name>
<dbReference type="PIR" id="A54403">
    <property type="entry name" value="A54403"/>
</dbReference>
<dbReference type="PDB" id="1LA6">
    <property type="method" value="X-ray"/>
    <property type="resolution" value="2.00 A"/>
    <property type="chains" value="A=1-142"/>
</dbReference>
<dbReference type="PDB" id="1T1N">
    <property type="method" value="X-ray"/>
    <property type="resolution" value="2.20 A"/>
    <property type="chains" value="A=1-142"/>
</dbReference>
<dbReference type="PDB" id="2AA1">
    <property type="method" value="X-ray"/>
    <property type="resolution" value="1.80 A"/>
    <property type="chains" value="A/C=1-142"/>
</dbReference>
<dbReference type="PDB" id="3D1K">
    <property type="method" value="X-ray"/>
    <property type="resolution" value="1.25 A"/>
    <property type="chains" value="A=1-142"/>
</dbReference>
<dbReference type="PDB" id="3NFE">
    <property type="method" value="X-ray"/>
    <property type="resolution" value="2.01 A"/>
    <property type="chains" value="A/C=1-142"/>
</dbReference>
<dbReference type="PDB" id="3NG6">
    <property type="method" value="X-ray"/>
    <property type="resolution" value="2.20 A"/>
    <property type="chains" value="A/C=1-142"/>
</dbReference>
<dbReference type="PDB" id="5LFG">
    <property type="method" value="X-ray"/>
    <property type="resolution" value="1.94 A"/>
    <property type="chains" value="A/C=1-142"/>
</dbReference>
<dbReference type="PDBsum" id="1LA6"/>
<dbReference type="PDBsum" id="1T1N"/>
<dbReference type="PDBsum" id="2AA1"/>
<dbReference type="PDBsum" id="3D1K"/>
<dbReference type="PDBsum" id="3NFE"/>
<dbReference type="PDBsum" id="3NG6"/>
<dbReference type="PDBsum" id="5LFG"/>
<dbReference type="SMR" id="P45718"/>
<dbReference type="MINT" id="P45718"/>
<dbReference type="iPTMnet" id="P45718"/>
<dbReference type="EvolutionaryTrace" id="P45718"/>
<dbReference type="GO" id="GO:0072562">
    <property type="term" value="C:blood microparticle"/>
    <property type="evidence" value="ECO:0007669"/>
    <property type="project" value="TreeGrafter"/>
</dbReference>
<dbReference type="GO" id="GO:0031838">
    <property type="term" value="C:haptoglobin-hemoglobin complex"/>
    <property type="evidence" value="ECO:0007669"/>
    <property type="project" value="TreeGrafter"/>
</dbReference>
<dbReference type="GO" id="GO:0005833">
    <property type="term" value="C:hemoglobin complex"/>
    <property type="evidence" value="ECO:0007669"/>
    <property type="project" value="InterPro"/>
</dbReference>
<dbReference type="GO" id="GO:0031720">
    <property type="term" value="F:haptoglobin binding"/>
    <property type="evidence" value="ECO:0007669"/>
    <property type="project" value="TreeGrafter"/>
</dbReference>
<dbReference type="GO" id="GO:0020037">
    <property type="term" value="F:heme binding"/>
    <property type="evidence" value="ECO:0007669"/>
    <property type="project" value="InterPro"/>
</dbReference>
<dbReference type="GO" id="GO:0005506">
    <property type="term" value="F:iron ion binding"/>
    <property type="evidence" value="ECO:0007669"/>
    <property type="project" value="InterPro"/>
</dbReference>
<dbReference type="GO" id="GO:0043177">
    <property type="term" value="F:organic acid binding"/>
    <property type="evidence" value="ECO:0007669"/>
    <property type="project" value="TreeGrafter"/>
</dbReference>
<dbReference type="GO" id="GO:0019825">
    <property type="term" value="F:oxygen binding"/>
    <property type="evidence" value="ECO:0007669"/>
    <property type="project" value="InterPro"/>
</dbReference>
<dbReference type="GO" id="GO:0005344">
    <property type="term" value="F:oxygen carrier activity"/>
    <property type="evidence" value="ECO:0007669"/>
    <property type="project" value="UniProtKB-KW"/>
</dbReference>
<dbReference type="GO" id="GO:0004601">
    <property type="term" value="F:peroxidase activity"/>
    <property type="evidence" value="ECO:0007669"/>
    <property type="project" value="TreeGrafter"/>
</dbReference>
<dbReference type="GO" id="GO:0042744">
    <property type="term" value="P:hydrogen peroxide catabolic process"/>
    <property type="evidence" value="ECO:0007669"/>
    <property type="project" value="TreeGrafter"/>
</dbReference>
<dbReference type="CDD" id="cd08927">
    <property type="entry name" value="Hb-alpha-like"/>
    <property type="match status" value="1"/>
</dbReference>
<dbReference type="FunFam" id="1.10.490.10:FF:000002">
    <property type="entry name" value="Hemoglobin subunit alpha"/>
    <property type="match status" value="1"/>
</dbReference>
<dbReference type="Gene3D" id="1.10.490.10">
    <property type="entry name" value="Globins"/>
    <property type="match status" value="1"/>
</dbReference>
<dbReference type="InterPro" id="IPR000971">
    <property type="entry name" value="Globin"/>
</dbReference>
<dbReference type="InterPro" id="IPR009050">
    <property type="entry name" value="Globin-like_sf"/>
</dbReference>
<dbReference type="InterPro" id="IPR012292">
    <property type="entry name" value="Globin/Proto"/>
</dbReference>
<dbReference type="InterPro" id="IPR002338">
    <property type="entry name" value="Hemoglobin_a-typ"/>
</dbReference>
<dbReference type="InterPro" id="IPR050056">
    <property type="entry name" value="Hemoglobin_oxygen_transport"/>
</dbReference>
<dbReference type="InterPro" id="IPR002339">
    <property type="entry name" value="Hemoglobin_pi"/>
</dbReference>
<dbReference type="PANTHER" id="PTHR11442">
    <property type="entry name" value="HEMOGLOBIN FAMILY MEMBER"/>
    <property type="match status" value="1"/>
</dbReference>
<dbReference type="PANTHER" id="PTHR11442:SF41">
    <property type="entry name" value="HEMOGLOBIN SUBUNIT ZETA"/>
    <property type="match status" value="1"/>
</dbReference>
<dbReference type="Pfam" id="PF00042">
    <property type="entry name" value="Globin"/>
    <property type="match status" value="1"/>
</dbReference>
<dbReference type="PRINTS" id="PR00612">
    <property type="entry name" value="ALPHAHAEM"/>
</dbReference>
<dbReference type="PRINTS" id="PR00815">
    <property type="entry name" value="PIHAEM"/>
</dbReference>
<dbReference type="SUPFAM" id="SSF46458">
    <property type="entry name" value="Globin-like"/>
    <property type="match status" value="1"/>
</dbReference>
<dbReference type="PROSITE" id="PS01033">
    <property type="entry name" value="GLOBIN"/>
    <property type="match status" value="1"/>
</dbReference>
<comment type="function">
    <text evidence="2">Involved in oxygen transport from gills to the various peripheral tissues.</text>
</comment>
<comment type="subunit">
    <text evidence="2">Hb1 is a heterotetramer of two alpha-1 chains and two beta chains. HbC is a heterotetramer of two alpha-1 chains and two beta-C chains.</text>
</comment>
<comment type="tissue specificity">
    <text>Red blood cells.</text>
</comment>
<comment type="miscellaneous">
    <text>This fish has three hemoglobins: Hb1 (major, about 65-70% of the total), Hb2 (about 5% of the total) and HbC (about 20-25% of the total). Hb1 and Hb2 display a very weak Bohr effect and no Root effect.</text>
</comment>
<comment type="similarity">
    <text evidence="1">Belongs to the globin family.</text>
</comment>
<protein>
    <recommendedName>
        <fullName>Hemoglobin subunit alpha-1</fullName>
    </recommendedName>
    <alternativeName>
        <fullName>Alpha-1-globin</fullName>
    </alternativeName>
    <alternativeName>
        <fullName>Hemoglobin alpha-1 chain</fullName>
    </alternativeName>
</protein>
<sequence length="142" mass="15653">SLSDKDKAAVRALWSKIGKSSDAIGNDALSRMIVVYPQTKIYFSHWPDVTPGSPNIKAHGKKVMGGIALAVSKIDDLKTGLMELSEQHAYKLRVDPSNFKILNHCILVVISTMFPKEFTPEAHVSLDKFLSGVALALAERYR</sequence>
<organism>
    <name type="scientific">Trematomus newnesi</name>
    <name type="common">Dusky notothen</name>
    <dbReference type="NCBI Taxonomy" id="35730"/>
    <lineage>
        <taxon>Eukaryota</taxon>
        <taxon>Metazoa</taxon>
        <taxon>Chordata</taxon>
        <taxon>Craniata</taxon>
        <taxon>Vertebrata</taxon>
        <taxon>Euteleostomi</taxon>
        <taxon>Actinopterygii</taxon>
        <taxon>Neopterygii</taxon>
        <taxon>Teleostei</taxon>
        <taxon>Neoteleostei</taxon>
        <taxon>Acanthomorphata</taxon>
        <taxon>Eupercaria</taxon>
        <taxon>Perciformes</taxon>
        <taxon>Notothenioidei</taxon>
        <taxon>Nototheniidae</taxon>
        <taxon>Trematomus</taxon>
    </lineage>
</organism>
<proteinExistence type="evidence at protein level"/>